<protein>
    <recommendedName>
        <fullName>Adenine DNA glycosylase</fullName>
        <ecNumber evidence="2">3.2.2.31</ecNumber>
    </recommendedName>
</protein>
<keyword id="KW-0004">4Fe-4S</keyword>
<keyword id="KW-0227">DNA damage</keyword>
<keyword id="KW-0234">DNA repair</keyword>
<keyword id="KW-0326">Glycosidase</keyword>
<keyword id="KW-0378">Hydrolase</keyword>
<keyword id="KW-0408">Iron</keyword>
<keyword id="KW-0411">Iron-sulfur</keyword>
<keyword id="KW-0479">Metal-binding</keyword>
<keyword id="KW-1185">Reference proteome</keyword>
<organism>
    <name type="scientific">Buchnera aphidicola subsp. Baizongia pistaciae (strain Bp)</name>
    <dbReference type="NCBI Taxonomy" id="224915"/>
    <lineage>
        <taxon>Bacteria</taxon>
        <taxon>Pseudomonadati</taxon>
        <taxon>Pseudomonadota</taxon>
        <taxon>Gammaproteobacteria</taxon>
        <taxon>Enterobacterales</taxon>
        <taxon>Erwiniaceae</taxon>
        <taxon>Buchnera</taxon>
    </lineage>
</organism>
<accession>Q89A45</accession>
<gene>
    <name type="primary">mutY</name>
    <name type="ordered locus">bbp_500</name>
</gene>
<feature type="chain" id="PRO_0000102233" description="Adenine DNA glycosylase">
    <location>
        <begin position="1"/>
        <end position="351"/>
    </location>
</feature>
<feature type="active site" description="Proton donor/acceptor" evidence="3">
    <location>
        <position position="37"/>
    </location>
</feature>
<feature type="binding site" evidence="1">
    <location>
        <position position="190"/>
    </location>
    <ligand>
        <name>[4Fe-4S] cluster</name>
        <dbReference type="ChEBI" id="CHEBI:49883"/>
    </ligand>
</feature>
<feature type="binding site" evidence="1">
    <location>
        <position position="197"/>
    </location>
    <ligand>
        <name>[4Fe-4S] cluster</name>
        <dbReference type="ChEBI" id="CHEBI:49883"/>
    </ligand>
</feature>
<feature type="binding site" evidence="1">
    <location>
        <position position="200"/>
    </location>
    <ligand>
        <name>[4Fe-4S] cluster</name>
        <dbReference type="ChEBI" id="CHEBI:49883"/>
    </ligand>
</feature>
<feature type="binding site" evidence="1">
    <location>
        <position position="206"/>
    </location>
    <ligand>
        <name>[4Fe-4S] cluster</name>
        <dbReference type="ChEBI" id="CHEBI:49883"/>
    </ligand>
</feature>
<feature type="site" description="Transition state stabilizer" evidence="3">
    <location>
        <position position="138"/>
    </location>
</feature>
<reference key="1">
    <citation type="journal article" date="2003" name="Proc. Natl. Acad. Sci. U.S.A.">
        <title>Reductive genome evolution in Buchnera aphidicola.</title>
        <authorList>
            <person name="van Ham R.C.H.J."/>
            <person name="Kamerbeek J."/>
            <person name="Palacios C."/>
            <person name="Rausell C."/>
            <person name="Abascal F."/>
            <person name="Bastolla U."/>
            <person name="Fernandez J.M."/>
            <person name="Jimenez L."/>
            <person name="Postigo M."/>
            <person name="Silva F.J."/>
            <person name="Tamames J."/>
            <person name="Viguera E."/>
            <person name="Latorre A."/>
            <person name="Valencia A."/>
            <person name="Moran F."/>
            <person name="Moya A."/>
        </authorList>
    </citation>
    <scope>NUCLEOTIDE SEQUENCE [LARGE SCALE GENOMIC DNA]</scope>
    <source>
        <strain>Bp</strain>
    </source>
</reference>
<dbReference type="EC" id="3.2.2.31" evidence="2"/>
<dbReference type="EMBL" id="AE016826">
    <property type="protein sequence ID" value="AAO27205.1"/>
    <property type="molecule type" value="Genomic_DNA"/>
</dbReference>
<dbReference type="RefSeq" id="WP_011091606.1">
    <property type="nucleotide sequence ID" value="NC_004545.1"/>
</dbReference>
<dbReference type="SMR" id="Q89A45"/>
<dbReference type="STRING" id="224915.bbp_500"/>
<dbReference type="KEGG" id="bab:bbp_500"/>
<dbReference type="eggNOG" id="COG1194">
    <property type="taxonomic scope" value="Bacteria"/>
</dbReference>
<dbReference type="HOGENOM" id="CLU_012862_0_2_6"/>
<dbReference type="OrthoDB" id="9802365at2"/>
<dbReference type="Proteomes" id="UP000000601">
    <property type="component" value="Chromosome"/>
</dbReference>
<dbReference type="GO" id="GO:0051539">
    <property type="term" value="F:4 iron, 4 sulfur cluster binding"/>
    <property type="evidence" value="ECO:0007669"/>
    <property type="project" value="UniProtKB-KW"/>
</dbReference>
<dbReference type="GO" id="GO:0034039">
    <property type="term" value="F:8-oxo-7,8-dihydroguanine DNA N-glycosylase activity"/>
    <property type="evidence" value="ECO:0007669"/>
    <property type="project" value="TreeGrafter"/>
</dbReference>
<dbReference type="GO" id="GO:0035485">
    <property type="term" value="F:adenine/guanine mispair binding"/>
    <property type="evidence" value="ECO:0007669"/>
    <property type="project" value="TreeGrafter"/>
</dbReference>
<dbReference type="GO" id="GO:0046872">
    <property type="term" value="F:metal ion binding"/>
    <property type="evidence" value="ECO:0007669"/>
    <property type="project" value="UniProtKB-KW"/>
</dbReference>
<dbReference type="GO" id="GO:0032357">
    <property type="term" value="F:oxidized purine DNA binding"/>
    <property type="evidence" value="ECO:0007669"/>
    <property type="project" value="TreeGrafter"/>
</dbReference>
<dbReference type="GO" id="GO:0000701">
    <property type="term" value="F:purine-specific mismatch base pair DNA N-glycosylase activity"/>
    <property type="evidence" value="ECO:0007669"/>
    <property type="project" value="UniProtKB-EC"/>
</dbReference>
<dbReference type="GO" id="GO:0006284">
    <property type="term" value="P:base-excision repair"/>
    <property type="evidence" value="ECO:0007669"/>
    <property type="project" value="InterPro"/>
</dbReference>
<dbReference type="GO" id="GO:0006298">
    <property type="term" value="P:mismatch repair"/>
    <property type="evidence" value="ECO:0007669"/>
    <property type="project" value="TreeGrafter"/>
</dbReference>
<dbReference type="CDD" id="cd00056">
    <property type="entry name" value="ENDO3c"/>
    <property type="match status" value="1"/>
</dbReference>
<dbReference type="CDD" id="cd03431">
    <property type="entry name" value="NUDIX_DNA_Glycosylase_C-MutY"/>
    <property type="match status" value="1"/>
</dbReference>
<dbReference type="FunFam" id="1.10.340.30:FF:000002">
    <property type="entry name" value="Adenine DNA glycosylase"/>
    <property type="match status" value="1"/>
</dbReference>
<dbReference type="Gene3D" id="1.10.1670.10">
    <property type="entry name" value="Helix-hairpin-Helix base-excision DNA repair enzymes (C-terminal)"/>
    <property type="match status" value="1"/>
</dbReference>
<dbReference type="Gene3D" id="1.10.340.30">
    <property type="entry name" value="Hypothetical protein, domain 2"/>
    <property type="match status" value="1"/>
</dbReference>
<dbReference type="Gene3D" id="3.90.79.10">
    <property type="entry name" value="Nucleoside Triphosphate Pyrophosphohydrolase"/>
    <property type="match status" value="1"/>
</dbReference>
<dbReference type="InterPro" id="IPR005760">
    <property type="entry name" value="A/G_AdeGlyc_MutY"/>
</dbReference>
<dbReference type="InterPro" id="IPR011257">
    <property type="entry name" value="DNA_glycosylase"/>
</dbReference>
<dbReference type="InterPro" id="IPR004036">
    <property type="entry name" value="Endonuclease-III-like_CS2"/>
</dbReference>
<dbReference type="InterPro" id="IPR003651">
    <property type="entry name" value="Endonuclease3_FeS-loop_motif"/>
</dbReference>
<dbReference type="InterPro" id="IPR004035">
    <property type="entry name" value="Endouclease-III_FeS-bd_BS"/>
</dbReference>
<dbReference type="InterPro" id="IPR003265">
    <property type="entry name" value="HhH-GPD_domain"/>
</dbReference>
<dbReference type="InterPro" id="IPR023170">
    <property type="entry name" value="HhH_base_excis_C"/>
</dbReference>
<dbReference type="InterPro" id="IPR000445">
    <property type="entry name" value="HhH_motif"/>
</dbReference>
<dbReference type="InterPro" id="IPR044298">
    <property type="entry name" value="MIG/MutY"/>
</dbReference>
<dbReference type="InterPro" id="IPR029119">
    <property type="entry name" value="MutY_C"/>
</dbReference>
<dbReference type="InterPro" id="IPR015797">
    <property type="entry name" value="NUDIX_hydrolase-like_dom_sf"/>
</dbReference>
<dbReference type="NCBIfam" id="TIGR01084">
    <property type="entry name" value="mutY"/>
    <property type="match status" value="1"/>
</dbReference>
<dbReference type="PANTHER" id="PTHR42944">
    <property type="entry name" value="ADENINE DNA GLYCOSYLASE"/>
    <property type="match status" value="1"/>
</dbReference>
<dbReference type="PANTHER" id="PTHR42944:SF1">
    <property type="entry name" value="ADENINE DNA GLYCOSYLASE"/>
    <property type="match status" value="1"/>
</dbReference>
<dbReference type="Pfam" id="PF00633">
    <property type="entry name" value="HHH"/>
    <property type="match status" value="1"/>
</dbReference>
<dbReference type="Pfam" id="PF00730">
    <property type="entry name" value="HhH-GPD"/>
    <property type="match status" value="1"/>
</dbReference>
<dbReference type="Pfam" id="PF14815">
    <property type="entry name" value="NUDIX_4"/>
    <property type="match status" value="1"/>
</dbReference>
<dbReference type="SMART" id="SM00478">
    <property type="entry name" value="ENDO3c"/>
    <property type="match status" value="1"/>
</dbReference>
<dbReference type="SMART" id="SM00525">
    <property type="entry name" value="FES"/>
    <property type="match status" value="1"/>
</dbReference>
<dbReference type="SUPFAM" id="SSF48150">
    <property type="entry name" value="DNA-glycosylase"/>
    <property type="match status" value="1"/>
</dbReference>
<dbReference type="SUPFAM" id="SSF55811">
    <property type="entry name" value="Nudix"/>
    <property type="match status" value="1"/>
</dbReference>
<dbReference type="PROSITE" id="PS00764">
    <property type="entry name" value="ENDONUCLEASE_III_1"/>
    <property type="match status" value="1"/>
</dbReference>
<dbReference type="PROSITE" id="PS01155">
    <property type="entry name" value="ENDONUCLEASE_III_2"/>
    <property type="match status" value="1"/>
</dbReference>
<sequence>MTTLVFYQTILNWYHHFGRKTLPWQIKKNPYKTWISEIMLQQTQVKTVIPYYCKFIKRFPNIDTLSDSPLDSILNLWSGLGYYTRARNIYKTAKILKQKFNGIFPNSYAEIIKLPGIGKSTAGAILSFGFNLYSCILDGNIKRVLIRYYSININNKYIEKLLWKTIESITPIYHTNKFNQALIDIGALICLKSNPKCNICPLKSTCKSYLNNKLFQINCKKNKKHIIPKTKYWFLILQYKNYIFLEKRQNLGIWKKLFCFPQFIRQNDILSWIQKNNTKIKKINILNEFKHKLSHLTLYINPIWIIINKISIFSNNNKTIWYNLNNPQCIGLPTPVTKIITKIKKFNTHHE</sequence>
<evidence type="ECO:0000250" key="1"/>
<evidence type="ECO:0000250" key="2">
    <source>
        <dbReference type="UniProtKB" id="P17802"/>
    </source>
</evidence>
<evidence type="ECO:0000250" key="3">
    <source>
        <dbReference type="UniProtKB" id="P83847"/>
    </source>
</evidence>
<evidence type="ECO:0000305" key="4"/>
<name>MUTY_BUCBP</name>
<comment type="function">
    <text evidence="2">Adenine glycosylase active on G-A mispairs. MutY also corrects error-prone DNA synthesis past GO lesions which are due to the oxidatively damaged form of guanine: 7,8-dihydro-8-oxoguanine (8-oxo-dGTP).</text>
</comment>
<comment type="catalytic activity">
    <reaction evidence="2">
        <text>Hydrolyzes free adenine bases from 7,8-dihydro-8-oxoguanine:adenine mismatched double-stranded DNA, leaving an apurinic site.</text>
        <dbReference type="EC" id="3.2.2.31"/>
    </reaction>
</comment>
<comment type="cofactor">
    <cofactor evidence="2">
        <name>[4Fe-4S] cluster</name>
        <dbReference type="ChEBI" id="CHEBI:49883"/>
    </cofactor>
    <text evidence="2">Binds 1 [4Fe-4S] cluster. The cluster does not appear to play a role in catalysis, but is probably involved in the proper positioning of the enzyme along the DNA strand.</text>
</comment>
<comment type="subunit">
    <text evidence="2">Monomer.</text>
</comment>
<comment type="similarity">
    <text evidence="4">Belongs to the Nth/MutY family.</text>
</comment>
<proteinExistence type="inferred from homology"/>